<keyword id="KW-0963">Cytoplasm</keyword>
<keyword id="KW-0342">GTP-binding</keyword>
<keyword id="KW-0436">Ligase</keyword>
<keyword id="KW-0460">Magnesium</keyword>
<keyword id="KW-0479">Metal-binding</keyword>
<keyword id="KW-0547">Nucleotide-binding</keyword>
<keyword id="KW-0658">Purine biosynthesis</keyword>
<keyword id="KW-1185">Reference proteome</keyword>
<reference key="1">
    <citation type="journal article" date="2002" name="Nucleic Acids Res.">
        <title>Genome sequence of Oceanobacillus iheyensis isolated from the Iheya Ridge and its unexpected adaptive capabilities to extreme environments.</title>
        <authorList>
            <person name="Takami H."/>
            <person name="Takaki Y."/>
            <person name="Uchiyama I."/>
        </authorList>
    </citation>
    <scope>NUCLEOTIDE SEQUENCE [LARGE SCALE GENOMIC DNA]</scope>
    <source>
        <strain>DSM 14371 / CIP 107618 / JCM 11309 / KCTC 3954 / HTE831</strain>
    </source>
</reference>
<sequence>MSSVVVVGTQWGDEGKGKITDFLSQNAEVVARYQGGNNAGHTIKFDDVTYKLHLIPSGIFFEDKICVLGNGMVIDPKAFVEEVAYLHERNVSTDNLRISNRAHVILPYHLKLDILQEEDKGANKIGTTKKGIGPAYMDKAARVGIRVADLMDKDAFREKLVQNLKEKNRLFEKVYEADPIQVEEILDEYYAYGQKMAPYVTDTSVVLNDAIDEGKRVLFEGAQGVMLDIDQGTYPFVTSSNPIAGGVTIGSGVGPTKINHVVGVSKAYTTRVGDGPFPTELHDEIGNQIREVGREYGTTTGRARRVGWFDSVVVRHARRVSGITDLSLNSIDVLTGIETLKICVAYRYKGEIMKEFPASLKVLAECEPVYEEMPGWQEDITGAKSLDDLPENARHYLERVSQLTEIPLSIFSVGPDRSQTNVVRSVYRP</sequence>
<accession>Q8EKX9</accession>
<evidence type="ECO:0000255" key="1">
    <source>
        <dbReference type="HAMAP-Rule" id="MF_00011"/>
    </source>
</evidence>
<dbReference type="EC" id="6.3.4.4" evidence="1"/>
<dbReference type="EMBL" id="BA000028">
    <property type="protein sequence ID" value="BAC15409.1"/>
    <property type="molecule type" value="Genomic_DNA"/>
</dbReference>
<dbReference type="RefSeq" id="WP_011067851.1">
    <property type="nucleotide sequence ID" value="NC_004193.1"/>
</dbReference>
<dbReference type="SMR" id="Q8EKX9"/>
<dbReference type="STRING" id="221109.gene:10735705"/>
<dbReference type="KEGG" id="oih:OB3453"/>
<dbReference type="eggNOG" id="COG0104">
    <property type="taxonomic scope" value="Bacteria"/>
</dbReference>
<dbReference type="HOGENOM" id="CLU_029848_0_0_9"/>
<dbReference type="OrthoDB" id="9807553at2"/>
<dbReference type="PhylomeDB" id="Q8EKX9"/>
<dbReference type="UniPathway" id="UPA00075">
    <property type="reaction ID" value="UER00335"/>
</dbReference>
<dbReference type="Proteomes" id="UP000000822">
    <property type="component" value="Chromosome"/>
</dbReference>
<dbReference type="GO" id="GO:0005737">
    <property type="term" value="C:cytoplasm"/>
    <property type="evidence" value="ECO:0007669"/>
    <property type="project" value="UniProtKB-SubCell"/>
</dbReference>
<dbReference type="GO" id="GO:0004019">
    <property type="term" value="F:adenylosuccinate synthase activity"/>
    <property type="evidence" value="ECO:0007669"/>
    <property type="project" value="UniProtKB-UniRule"/>
</dbReference>
<dbReference type="GO" id="GO:0005525">
    <property type="term" value="F:GTP binding"/>
    <property type="evidence" value="ECO:0007669"/>
    <property type="project" value="UniProtKB-UniRule"/>
</dbReference>
<dbReference type="GO" id="GO:0000287">
    <property type="term" value="F:magnesium ion binding"/>
    <property type="evidence" value="ECO:0007669"/>
    <property type="project" value="UniProtKB-UniRule"/>
</dbReference>
<dbReference type="GO" id="GO:0044208">
    <property type="term" value="P:'de novo' AMP biosynthetic process"/>
    <property type="evidence" value="ECO:0007669"/>
    <property type="project" value="UniProtKB-UniRule"/>
</dbReference>
<dbReference type="GO" id="GO:0046040">
    <property type="term" value="P:IMP metabolic process"/>
    <property type="evidence" value="ECO:0007669"/>
    <property type="project" value="TreeGrafter"/>
</dbReference>
<dbReference type="CDD" id="cd03108">
    <property type="entry name" value="AdSS"/>
    <property type="match status" value="1"/>
</dbReference>
<dbReference type="FunFam" id="1.10.300.10:FF:000001">
    <property type="entry name" value="Adenylosuccinate synthetase"/>
    <property type="match status" value="1"/>
</dbReference>
<dbReference type="FunFam" id="3.90.170.10:FF:000001">
    <property type="entry name" value="Adenylosuccinate synthetase"/>
    <property type="match status" value="1"/>
</dbReference>
<dbReference type="Gene3D" id="3.40.440.10">
    <property type="entry name" value="Adenylosuccinate Synthetase, subunit A, domain 1"/>
    <property type="match status" value="1"/>
</dbReference>
<dbReference type="Gene3D" id="1.10.300.10">
    <property type="entry name" value="Adenylosuccinate Synthetase, subunit A, domain 2"/>
    <property type="match status" value="1"/>
</dbReference>
<dbReference type="Gene3D" id="3.90.170.10">
    <property type="entry name" value="Adenylosuccinate Synthetase, subunit A, domain 3"/>
    <property type="match status" value="1"/>
</dbReference>
<dbReference type="HAMAP" id="MF_00011">
    <property type="entry name" value="Adenylosucc_synth"/>
    <property type="match status" value="1"/>
</dbReference>
<dbReference type="InterPro" id="IPR018220">
    <property type="entry name" value="Adenylosuccin_syn_GTP-bd"/>
</dbReference>
<dbReference type="InterPro" id="IPR033128">
    <property type="entry name" value="Adenylosuccin_syn_Lys_AS"/>
</dbReference>
<dbReference type="InterPro" id="IPR042109">
    <property type="entry name" value="Adenylosuccinate_synth_dom1"/>
</dbReference>
<dbReference type="InterPro" id="IPR042110">
    <property type="entry name" value="Adenylosuccinate_synth_dom2"/>
</dbReference>
<dbReference type="InterPro" id="IPR042111">
    <property type="entry name" value="Adenylosuccinate_synth_dom3"/>
</dbReference>
<dbReference type="InterPro" id="IPR001114">
    <property type="entry name" value="Adenylosuccinate_synthetase"/>
</dbReference>
<dbReference type="InterPro" id="IPR027417">
    <property type="entry name" value="P-loop_NTPase"/>
</dbReference>
<dbReference type="NCBIfam" id="NF002223">
    <property type="entry name" value="PRK01117.1"/>
    <property type="match status" value="1"/>
</dbReference>
<dbReference type="NCBIfam" id="TIGR00184">
    <property type="entry name" value="purA"/>
    <property type="match status" value="1"/>
</dbReference>
<dbReference type="PANTHER" id="PTHR11846">
    <property type="entry name" value="ADENYLOSUCCINATE SYNTHETASE"/>
    <property type="match status" value="1"/>
</dbReference>
<dbReference type="PANTHER" id="PTHR11846:SF0">
    <property type="entry name" value="ADENYLOSUCCINATE SYNTHETASE"/>
    <property type="match status" value="1"/>
</dbReference>
<dbReference type="Pfam" id="PF00709">
    <property type="entry name" value="Adenylsucc_synt"/>
    <property type="match status" value="1"/>
</dbReference>
<dbReference type="SMART" id="SM00788">
    <property type="entry name" value="Adenylsucc_synt"/>
    <property type="match status" value="1"/>
</dbReference>
<dbReference type="SUPFAM" id="SSF52540">
    <property type="entry name" value="P-loop containing nucleoside triphosphate hydrolases"/>
    <property type="match status" value="1"/>
</dbReference>
<dbReference type="PROSITE" id="PS01266">
    <property type="entry name" value="ADENYLOSUCCIN_SYN_1"/>
    <property type="match status" value="1"/>
</dbReference>
<dbReference type="PROSITE" id="PS00513">
    <property type="entry name" value="ADENYLOSUCCIN_SYN_2"/>
    <property type="match status" value="1"/>
</dbReference>
<comment type="function">
    <text evidence="1">Plays an important role in the de novo pathway of purine nucleotide biosynthesis. Catalyzes the first committed step in the biosynthesis of AMP from IMP.</text>
</comment>
<comment type="catalytic activity">
    <reaction evidence="1">
        <text>IMP + L-aspartate + GTP = N(6)-(1,2-dicarboxyethyl)-AMP + GDP + phosphate + 2 H(+)</text>
        <dbReference type="Rhea" id="RHEA:15753"/>
        <dbReference type="ChEBI" id="CHEBI:15378"/>
        <dbReference type="ChEBI" id="CHEBI:29991"/>
        <dbReference type="ChEBI" id="CHEBI:37565"/>
        <dbReference type="ChEBI" id="CHEBI:43474"/>
        <dbReference type="ChEBI" id="CHEBI:57567"/>
        <dbReference type="ChEBI" id="CHEBI:58053"/>
        <dbReference type="ChEBI" id="CHEBI:58189"/>
        <dbReference type="EC" id="6.3.4.4"/>
    </reaction>
</comment>
<comment type="cofactor">
    <cofactor evidence="1">
        <name>Mg(2+)</name>
        <dbReference type="ChEBI" id="CHEBI:18420"/>
    </cofactor>
    <text evidence="1">Binds 1 Mg(2+) ion per subunit.</text>
</comment>
<comment type="pathway">
    <text evidence="1">Purine metabolism; AMP biosynthesis via de novo pathway; AMP from IMP: step 1/2.</text>
</comment>
<comment type="subunit">
    <text evidence="1">Homodimer.</text>
</comment>
<comment type="subcellular location">
    <subcellularLocation>
        <location evidence="1">Cytoplasm</location>
    </subcellularLocation>
</comment>
<comment type="similarity">
    <text evidence="1">Belongs to the adenylosuccinate synthetase family.</text>
</comment>
<name>PURA_OCEIH</name>
<gene>
    <name evidence="1" type="primary">purA</name>
    <name type="ordered locus">OB3453</name>
</gene>
<organism>
    <name type="scientific">Oceanobacillus iheyensis (strain DSM 14371 / CIP 107618 / JCM 11309 / KCTC 3954 / HTE831)</name>
    <dbReference type="NCBI Taxonomy" id="221109"/>
    <lineage>
        <taxon>Bacteria</taxon>
        <taxon>Bacillati</taxon>
        <taxon>Bacillota</taxon>
        <taxon>Bacilli</taxon>
        <taxon>Bacillales</taxon>
        <taxon>Bacillaceae</taxon>
        <taxon>Oceanobacillus</taxon>
    </lineage>
</organism>
<protein>
    <recommendedName>
        <fullName evidence="1">Adenylosuccinate synthetase</fullName>
        <shortName evidence="1">AMPSase</shortName>
        <shortName evidence="1">AdSS</shortName>
        <ecNumber evidence="1">6.3.4.4</ecNumber>
    </recommendedName>
    <alternativeName>
        <fullName evidence="1">IMP--aspartate ligase</fullName>
    </alternativeName>
</protein>
<proteinExistence type="inferred from homology"/>
<feature type="chain" id="PRO_0000095205" description="Adenylosuccinate synthetase">
    <location>
        <begin position="1"/>
        <end position="429"/>
    </location>
</feature>
<feature type="active site" description="Proton acceptor" evidence="1">
    <location>
        <position position="13"/>
    </location>
</feature>
<feature type="active site" description="Proton donor" evidence="1">
    <location>
        <position position="41"/>
    </location>
</feature>
<feature type="binding site" evidence="1">
    <location>
        <begin position="12"/>
        <end position="18"/>
    </location>
    <ligand>
        <name>GTP</name>
        <dbReference type="ChEBI" id="CHEBI:37565"/>
    </ligand>
</feature>
<feature type="binding site" description="in other chain" evidence="1">
    <location>
        <begin position="13"/>
        <end position="16"/>
    </location>
    <ligand>
        <name>IMP</name>
        <dbReference type="ChEBI" id="CHEBI:58053"/>
        <note>ligand shared between dimeric partners</note>
    </ligand>
</feature>
<feature type="binding site" evidence="1">
    <location>
        <position position="13"/>
    </location>
    <ligand>
        <name>Mg(2+)</name>
        <dbReference type="ChEBI" id="CHEBI:18420"/>
    </ligand>
</feature>
<feature type="binding site" description="in other chain" evidence="1">
    <location>
        <begin position="38"/>
        <end position="41"/>
    </location>
    <ligand>
        <name>IMP</name>
        <dbReference type="ChEBI" id="CHEBI:58053"/>
        <note>ligand shared between dimeric partners</note>
    </ligand>
</feature>
<feature type="binding site" evidence="1">
    <location>
        <begin position="40"/>
        <end position="42"/>
    </location>
    <ligand>
        <name>GTP</name>
        <dbReference type="ChEBI" id="CHEBI:37565"/>
    </ligand>
</feature>
<feature type="binding site" evidence="1">
    <location>
        <position position="40"/>
    </location>
    <ligand>
        <name>Mg(2+)</name>
        <dbReference type="ChEBI" id="CHEBI:18420"/>
    </ligand>
</feature>
<feature type="binding site" description="in other chain" evidence="1">
    <location>
        <position position="128"/>
    </location>
    <ligand>
        <name>IMP</name>
        <dbReference type="ChEBI" id="CHEBI:58053"/>
        <note>ligand shared between dimeric partners</note>
    </ligand>
</feature>
<feature type="binding site" evidence="1">
    <location>
        <position position="142"/>
    </location>
    <ligand>
        <name>IMP</name>
        <dbReference type="ChEBI" id="CHEBI:58053"/>
        <note>ligand shared between dimeric partners</note>
    </ligand>
</feature>
<feature type="binding site" description="in other chain" evidence="1">
    <location>
        <position position="223"/>
    </location>
    <ligand>
        <name>IMP</name>
        <dbReference type="ChEBI" id="CHEBI:58053"/>
        <note>ligand shared between dimeric partners</note>
    </ligand>
</feature>
<feature type="binding site" description="in other chain" evidence="1">
    <location>
        <position position="238"/>
    </location>
    <ligand>
        <name>IMP</name>
        <dbReference type="ChEBI" id="CHEBI:58053"/>
        <note>ligand shared between dimeric partners</note>
    </ligand>
</feature>
<feature type="binding site" evidence="1">
    <location>
        <begin position="298"/>
        <end position="304"/>
    </location>
    <ligand>
        <name>substrate</name>
    </ligand>
</feature>
<feature type="binding site" description="in other chain" evidence="1">
    <location>
        <position position="302"/>
    </location>
    <ligand>
        <name>IMP</name>
        <dbReference type="ChEBI" id="CHEBI:58053"/>
        <note>ligand shared between dimeric partners</note>
    </ligand>
</feature>
<feature type="binding site" evidence="1">
    <location>
        <position position="304"/>
    </location>
    <ligand>
        <name>GTP</name>
        <dbReference type="ChEBI" id="CHEBI:37565"/>
    </ligand>
</feature>
<feature type="binding site" evidence="1">
    <location>
        <begin position="330"/>
        <end position="332"/>
    </location>
    <ligand>
        <name>GTP</name>
        <dbReference type="ChEBI" id="CHEBI:37565"/>
    </ligand>
</feature>
<feature type="binding site" evidence="1">
    <location>
        <begin position="412"/>
        <end position="414"/>
    </location>
    <ligand>
        <name>GTP</name>
        <dbReference type="ChEBI" id="CHEBI:37565"/>
    </ligand>
</feature>